<sequence length="38" mass="4483">MKVRASVKKMCEKCRVIRRHGRVMVICTATQKHKQRQG</sequence>
<comment type="similarity">
    <text evidence="1">Belongs to the bacterial ribosomal protein bL36 family.</text>
</comment>
<proteinExistence type="inferred from homology"/>
<evidence type="ECO:0000255" key="1">
    <source>
        <dbReference type="HAMAP-Rule" id="MF_00251"/>
    </source>
</evidence>
<evidence type="ECO:0000305" key="2"/>
<accession>Q7V9Y2</accession>
<keyword id="KW-1185">Reference proteome</keyword>
<keyword id="KW-0687">Ribonucleoprotein</keyword>
<keyword id="KW-0689">Ribosomal protein</keyword>
<organism>
    <name type="scientific">Prochlorococcus marinus (strain SARG / CCMP1375 / SS120)</name>
    <dbReference type="NCBI Taxonomy" id="167539"/>
    <lineage>
        <taxon>Bacteria</taxon>
        <taxon>Bacillati</taxon>
        <taxon>Cyanobacteriota</taxon>
        <taxon>Cyanophyceae</taxon>
        <taxon>Synechococcales</taxon>
        <taxon>Prochlorococcaceae</taxon>
        <taxon>Prochlorococcus</taxon>
    </lineage>
</organism>
<gene>
    <name evidence="1" type="primary">rpmJ</name>
    <name type="synonym">rpl36</name>
    <name type="ordered locus">Pro_1692</name>
</gene>
<feature type="chain" id="PRO_0000126236" description="Large ribosomal subunit protein bL36">
    <location>
        <begin position="1"/>
        <end position="38"/>
    </location>
</feature>
<dbReference type="EMBL" id="AE017126">
    <property type="protein sequence ID" value="AAQ00736.1"/>
    <property type="molecule type" value="Genomic_DNA"/>
</dbReference>
<dbReference type="RefSeq" id="NP_876083.1">
    <property type="nucleotide sequence ID" value="NC_005042.1"/>
</dbReference>
<dbReference type="RefSeq" id="WP_011125841.1">
    <property type="nucleotide sequence ID" value="NC_005042.1"/>
</dbReference>
<dbReference type="SMR" id="Q7V9Y2"/>
<dbReference type="STRING" id="167539.Pro_1692"/>
<dbReference type="EnsemblBacteria" id="AAQ00736">
    <property type="protein sequence ID" value="AAQ00736"/>
    <property type="gene ID" value="Pro_1692"/>
</dbReference>
<dbReference type="KEGG" id="pma:Pro_1692"/>
<dbReference type="PATRIC" id="fig|167539.5.peg.1787"/>
<dbReference type="eggNOG" id="COG0257">
    <property type="taxonomic scope" value="Bacteria"/>
</dbReference>
<dbReference type="HOGENOM" id="CLU_135723_6_2_3"/>
<dbReference type="OrthoDB" id="9802520at2"/>
<dbReference type="Proteomes" id="UP000001420">
    <property type="component" value="Chromosome"/>
</dbReference>
<dbReference type="GO" id="GO:0005737">
    <property type="term" value="C:cytoplasm"/>
    <property type="evidence" value="ECO:0007669"/>
    <property type="project" value="UniProtKB-ARBA"/>
</dbReference>
<dbReference type="GO" id="GO:1990904">
    <property type="term" value="C:ribonucleoprotein complex"/>
    <property type="evidence" value="ECO:0007669"/>
    <property type="project" value="UniProtKB-KW"/>
</dbReference>
<dbReference type="GO" id="GO:0005840">
    <property type="term" value="C:ribosome"/>
    <property type="evidence" value="ECO:0007669"/>
    <property type="project" value="UniProtKB-KW"/>
</dbReference>
<dbReference type="GO" id="GO:0003735">
    <property type="term" value="F:structural constituent of ribosome"/>
    <property type="evidence" value="ECO:0007669"/>
    <property type="project" value="InterPro"/>
</dbReference>
<dbReference type="GO" id="GO:0006412">
    <property type="term" value="P:translation"/>
    <property type="evidence" value="ECO:0007669"/>
    <property type="project" value="UniProtKB-UniRule"/>
</dbReference>
<dbReference type="HAMAP" id="MF_00251">
    <property type="entry name" value="Ribosomal_bL36"/>
    <property type="match status" value="1"/>
</dbReference>
<dbReference type="InterPro" id="IPR000473">
    <property type="entry name" value="Ribosomal_bL36"/>
</dbReference>
<dbReference type="InterPro" id="IPR035977">
    <property type="entry name" value="Ribosomal_bL36_sp"/>
</dbReference>
<dbReference type="NCBIfam" id="TIGR01022">
    <property type="entry name" value="rpmJ_bact"/>
    <property type="match status" value="1"/>
</dbReference>
<dbReference type="PANTHER" id="PTHR42888">
    <property type="entry name" value="50S RIBOSOMAL PROTEIN L36, CHLOROPLASTIC"/>
    <property type="match status" value="1"/>
</dbReference>
<dbReference type="PANTHER" id="PTHR42888:SF1">
    <property type="entry name" value="LARGE RIBOSOMAL SUBUNIT PROTEIN BL36C"/>
    <property type="match status" value="1"/>
</dbReference>
<dbReference type="Pfam" id="PF00444">
    <property type="entry name" value="Ribosomal_L36"/>
    <property type="match status" value="1"/>
</dbReference>
<dbReference type="SUPFAM" id="SSF57840">
    <property type="entry name" value="Ribosomal protein L36"/>
    <property type="match status" value="1"/>
</dbReference>
<dbReference type="PROSITE" id="PS00828">
    <property type="entry name" value="RIBOSOMAL_L36"/>
    <property type="match status" value="1"/>
</dbReference>
<protein>
    <recommendedName>
        <fullName evidence="1">Large ribosomal subunit protein bL36</fullName>
    </recommendedName>
    <alternativeName>
        <fullName evidence="2">50S ribosomal protein L36</fullName>
    </alternativeName>
</protein>
<name>RL36_PROMA</name>
<reference key="1">
    <citation type="journal article" date="2003" name="Proc. Natl. Acad. Sci. U.S.A.">
        <title>Genome sequence of the cyanobacterium Prochlorococcus marinus SS120, a nearly minimal oxyphototrophic genome.</title>
        <authorList>
            <person name="Dufresne A."/>
            <person name="Salanoubat M."/>
            <person name="Partensky F."/>
            <person name="Artiguenave F."/>
            <person name="Axmann I.M."/>
            <person name="Barbe V."/>
            <person name="Duprat S."/>
            <person name="Galperin M.Y."/>
            <person name="Koonin E.V."/>
            <person name="Le Gall F."/>
            <person name="Makarova K.S."/>
            <person name="Ostrowski M."/>
            <person name="Oztas S."/>
            <person name="Robert C."/>
            <person name="Rogozin I.B."/>
            <person name="Scanlan D.J."/>
            <person name="Tandeau de Marsac N."/>
            <person name="Weissenbach J."/>
            <person name="Wincker P."/>
            <person name="Wolf Y.I."/>
            <person name="Hess W.R."/>
        </authorList>
    </citation>
    <scope>NUCLEOTIDE SEQUENCE [LARGE SCALE GENOMIC DNA]</scope>
    <source>
        <strain>SARG / CCMP1375 / SS120</strain>
    </source>
</reference>